<reference key="1">
    <citation type="journal article" date="2002" name="Nat. Biotechnol.">
        <title>Genome sequence of the dissimilatory metal ion-reducing bacterium Shewanella oneidensis.</title>
        <authorList>
            <person name="Heidelberg J.F."/>
            <person name="Paulsen I.T."/>
            <person name="Nelson K.E."/>
            <person name="Gaidos E.J."/>
            <person name="Nelson W.C."/>
            <person name="Read T.D."/>
            <person name="Eisen J.A."/>
            <person name="Seshadri R."/>
            <person name="Ward N.L."/>
            <person name="Methe B.A."/>
            <person name="Clayton R.A."/>
            <person name="Meyer T."/>
            <person name="Tsapin A."/>
            <person name="Scott J."/>
            <person name="Beanan M.J."/>
            <person name="Brinkac L.M."/>
            <person name="Daugherty S.C."/>
            <person name="DeBoy R.T."/>
            <person name="Dodson R.J."/>
            <person name="Durkin A.S."/>
            <person name="Haft D.H."/>
            <person name="Kolonay J.F."/>
            <person name="Madupu R."/>
            <person name="Peterson J.D."/>
            <person name="Umayam L.A."/>
            <person name="White O."/>
            <person name="Wolf A.M."/>
            <person name="Vamathevan J.J."/>
            <person name="Weidman J.F."/>
            <person name="Impraim M."/>
            <person name="Lee K."/>
            <person name="Berry K.J."/>
            <person name="Lee C."/>
            <person name="Mueller J."/>
            <person name="Khouri H.M."/>
            <person name="Gill J."/>
            <person name="Utterback T.R."/>
            <person name="McDonald L.A."/>
            <person name="Feldblyum T.V."/>
            <person name="Smith H.O."/>
            <person name="Venter J.C."/>
            <person name="Nealson K.H."/>
            <person name="Fraser C.M."/>
        </authorList>
    </citation>
    <scope>NUCLEOTIDE SEQUENCE [LARGE SCALE GENOMIC DNA]</scope>
    <source>
        <strain>ATCC 700550 / JCM 31522 / CIP 106686 / LMG 19005 / NCIMB 14063 / MR-1</strain>
    </source>
</reference>
<comment type="function">
    <text evidence="1">Redox regulated molecular chaperone. Protects both thermally unfolding and oxidatively damaged proteins from irreversible aggregation. Plays an important role in the bacterial defense system toward oxidative stress.</text>
</comment>
<comment type="subcellular location">
    <subcellularLocation>
        <location evidence="1">Cytoplasm</location>
    </subcellularLocation>
</comment>
<comment type="PTM">
    <text evidence="1">Under oxidizing conditions two disulfide bonds are formed involving the reactive cysteines. Under reducing conditions zinc is bound to the reactive cysteines and the protein is inactive.</text>
</comment>
<comment type="similarity">
    <text evidence="1">Belongs to the HSP33 family.</text>
</comment>
<keyword id="KW-0143">Chaperone</keyword>
<keyword id="KW-0963">Cytoplasm</keyword>
<keyword id="KW-1015">Disulfide bond</keyword>
<keyword id="KW-0676">Redox-active center</keyword>
<keyword id="KW-1185">Reference proteome</keyword>
<keyword id="KW-0862">Zinc</keyword>
<feature type="chain" id="PRO_0000192198" description="33 kDa chaperonin">
    <location>
        <begin position="1"/>
        <end position="286"/>
    </location>
</feature>
<feature type="disulfide bond" description="Redox-active" evidence="1">
    <location>
        <begin position="225"/>
        <end position="227"/>
    </location>
</feature>
<feature type="disulfide bond" description="Redox-active" evidence="1">
    <location>
        <begin position="258"/>
        <end position="261"/>
    </location>
</feature>
<dbReference type="EMBL" id="AE014299">
    <property type="protein sequence ID" value="AAN53250.1"/>
    <property type="molecule type" value="Genomic_DNA"/>
</dbReference>
<dbReference type="RefSeq" id="NP_715805.1">
    <property type="nucleotide sequence ID" value="NC_004347.2"/>
</dbReference>
<dbReference type="RefSeq" id="WP_011070560.1">
    <property type="nucleotide sequence ID" value="NC_004347.2"/>
</dbReference>
<dbReference type="SMR" id="Q8EKD2"/>
<dbReference type="STRING" id="211586.SO_0163"/>
<dbReference type="PaxDb" id="211586-SO_0163"/>
<dbReference type="KEGG" id="son:SO_0163"/>
<dbReference type="PATRIC" id="fig|211586.12.peg.152"/>
<dbReference type="eggNOG" id="COG1281">
    <property type="taxonomic scope" value="Bacteria"/>
</dbReference>
<dbReference type="HOGENOM" id="CLU_054493_0_0_6"/>
<dbReference type="OrthoDB" id="9793753at2"/>
<dbReference type="PhylomeDB" id="Q8EKD2"/>
<dbReference type="BioCyc" id="SONE211586:G1GMP-150-MONOMER"/>
<dbReference type="Proteomes" id="UP000008186">
    <property type="component" value="Chromosome"/>
</dbReference>
<dbReference type="GO" id="GO:0005737">
    <property type="term" value="C:cytoplasm"/>
    <property type="evidence" value="ECO:0000318"/>
    <property type="project" value="GO_Central"/>
</dbReference>
<dbReference type="GO" id="GO:0044183">
    <property type="term" value="F:protein folding chaperone"/>
    <property type="evidence" value="ECO:0000318"/>
    <property type="project" value="GO_Central"/>
</dbReference>
<dbReference type="GO" id="GO:0051082">
    <property type="term" value="F:unfolded protein binding"/>
    <property type="evidence" value="ECO:0007669"/>
    <property type="project" value="UniProtKB-UniRule"/>
</dbReference>
<dbReference type="GO" id="GO:0042026">
    <property type="term" value="P:protein refolding"/>
    <property type="evidence" value="ECO:0000318"/>
    <property type="project" value="GO_Central"/>
</dbReference>
<dbReference type="CDD" id="cd00498">
    <property type="entry name" value="Hsp33"/>
    <property type="match status" value="1"/>
</dbReference>
<dbReference type="Gene3D" id="1.10.287.480">
    <property type="entry name" value="helix hairpin bin"/>
    <property type="match status" value="1"/>
</dbReference>
<dbReference type="Gene3D" id="3.55.30.10">
    <property type="entry name" value="Hsp33 domain"/>
    <property type="match status" value="1"/>
</dbReference>
<dbReference type="Gene3D" id="3.90.1280.10">
    <property type="entry name" value="HSP33 redox switch-like"/>
    <property type="match status" value="1"/>
</dbReference>
<dbReference type="HAMAP" id="MF_00117">
    <property type="entry name" value="HslO"/>
    <property type="match status" value="1"/>
</dbReference>
<dbReference type="InterPro" id="IPR000397">
    <property type="entry name" value="Heat_shock_Hsp33"/>
</dbReference>
<dbReference type="InterPro" id="IPR016154">
    <property type="entry name" value="Heat_shock_Hsp33_C"/>
</dbReference>
<dbReference type="InterPro" id="IPR016153">
    <property type="entry name" value="Heat_shock_Hsp33_N"/>
</dbReference>
<dbReference type="InterPro" id="IPR023212">
    <property type="entry name" value="Hsp33_helix_hairpin_bin_dom_sf"/>
</dbReference>
<dbReference type="NCBIfam" id="NF001033">
    <property type="entry name" value="PRK00114.1"/>
    <property type="match status" value="1"/>
</dbReference>
<dbReference type="PANTHER" id="PTHR30111">
    <property type="entry name" value="33 KDA CHAPERONIN"/>
    <property type="match status" value="1"/>
</dbReference>
<dbReference type="PANTHER" id="PTHR30111:SF1">
    <property type="entry name" value="33 KDA CHAPERONIN"/>
    <property type="match status" value="1"/>
</dbReference>
<dbReference type="Pfam" id="PF01430">
    <property type="entry name" value="HSP33"/>
    <property type="match status" value="1"/>
</dbReference>
<dbReference type="PIRSF" id="PIRSF005261">
    <property type="entry name" value="Heat_shock_Hsp33"/>
    <property type="match status" value="1"/>
</dbReference>
<dbReference type="SUPFAM" id="SSF64397">
    <property type="entry name" value="Hsp33 domain"/>
    <property type="match status" value="1"/>
</dbReference>
<dbReference type="SUPFAM" id="SSF118352">
    <property type="entry name" value="HSP33 redox switch-like"/>
    <property type="match status" value="1"/>
</dbReference>
<accession>Q8EKD2</accession>
<name>HSLO_SHEON</name>
<evidence type="ECO:0000255" key="1">
    <source>
        <dbReference type="HAMAP-Rule" id="MF_00117"/>
    </source>
</evidence>
<gene>
    <name evidence="1" type="primary">hslO</name>
    <name type="ordered locus">SO_0163</name>
</gene>
<proteinExistence type="inferred from homology"/>
<organism>
    <name type="scientific">Shewanella oneidensis (strain ATCC 700550 / JCM 31522 / CIP 106686 / LMG 19005 / NCIMB 14063 / MR-1)</name>
    <dbReference type="NCBI Taxonomy" id="211586"/>
    <lineage>
        <taxon>Bacteria</taxon>
        <taxon>Pseudomonadati</taxon>
        <taxon>Pseudomonadota</taxon>
        <taxon>Gammaproteobacteria</taxon>
        <taxon>Alteromonadales</taxon>
        <taxon>Shewanellaceae</taxon>
        <taxon>Shewanella</taxon>
    </lineage>
</organism>
<protein>
    <recommendedName>
        <fullName evidence="1">33 kDa chaperonin</fullName>
    </recommendedName>
    <alternativeName>
        <fullName evidence="1">Heat shock protein 33 homolog</fullName>
        <shortName evidence="1">HSP33</shortName>
    </alternativeName>
</protein>
<sequence>MTQDILHRYLFDNADVRGELVQLQNSYQQVIGSHAYPPVLQTLLGELLAATSLLTATLKFSGDISVQLQGNGPVSLAVINGNNLQQLRGIARWDGELADDASLADLFGQGYMVITLTPDEGERYQGVVALDKPTLAACVEDYFNQSEQLPTALWLFADGKQAAGMFLQILPSQEDHNADFEHLCQLTATIKAEELFTLEAQEVLHRLYHQEEVRLFDPIEVSFKCTCSRERSAAAIKTIDQAEVEAILAEDGNVEMGCEYCNAKYLFDAIDIASIYANGTASNTQQ</sequence>